<gene>
    <name type="primary">SK1</name>
    <name type="ordered locus">At2g21940</name>
    <name type="ORF">F7D8.26</name>
</gene>
<organism>
    <name type="scientific">Arabidopsis thaliana</name>
    <name type="common">Mouse-ear cress</name>
    <dbReference type="NCBI Taxonomy" id="3702"/>
    <lineage>
        <taxon>Eukaryota</taxon>
        <taxon>Viridiplantae</taxon>
        <taxon>Streptophyta</taxon>
        <taxon>Embryophyta</taxon>
        <taxon>Tracheophyta</taxon>
        <taxon>Spermatophyta</taxon>
        <taxon>Magnoliopsida</taxon>
        <taxon>eudicotyledons</taxon>
        <taxon>Gunneridae</taxon>
        <taxon>Pentapetalae</taxon>
        <taxon>rosids</taxon>
        <taxon>malvids</taxon>
        <taxon>Brassicales</taxon>
        <taxon>Brassicaceae</taxon>
        <taxon>Camelineae</taxon>
        <taxon>Arabidopsis</taxon>
    </lineage>
</organism>
<reference key="1">
    <citation type="journal article" date="1999" name="Nature">
        <title>Sequence and analysis of chromosome 2 of the plant Arabidopsis thaliana.</title>
        <authorList>
            <person name="Lin X."/>
            <person name="Kaul S."/>
            <person name="Rounsley S.D."/>
            <person name="Shea T.P."/>
            <person name="Benito M.-I."/>
            <person name="Town C.D."/>
            <person name="Fujii C.Y."/>
            <person name="Mason T.M."/>
            <person name="Bowman C.L."/>
            <person name="Barnstead M.E."/>
            <person name="Feldblyum T.V."/>
            <person name="Buell C.R."/>
            <person name="Ketchum K.A."/>
            <person name="Lee J.J."/>
            <person name="Ronning C.M."/>
            <person name="Koo H.L."/>
            <person name="Moffat K.S."/>
            <person name="Cronin L.A."/>
            <person name="Shen M."/>
            <person name="Pai G."/>
            <person name="Van Aken S."/>
            <person name="Umayam L."/>
            <person name="Tallon L.J."/>
            <person name="Gill J.E."/>
            <person name="Adams M.D."/>
            <person name="Carrera A.J."/>
            <person name="Creasy T.H."/>
            <person name="Goodman H.M."/>
            <person name="Somerville C.R."/>
            <person name="Copenhaver G.P."/>
            <person name="Preuss D."/>
            <person name="Nierman W.C."/>
            <person name="White O."/>
            <person name="Eisen J.A."/>
            <person name="Salzberg S.L."/>
            <person name="Fraser C.M."/>
            <person name="Venter J.C."/>
        </authorList>
    </citation>
    <scope>NUCLEOTIDE SEQUENCE [LARGE SCALE GENOMIC DNA]</scope>
    <source>
        <strain>cv. Columbia</strain>
    </source>
</reference>
<reference key="2">
    <citation type="journal article" date="2017" name="Plant J.">
        <title>Araport11: a complete reannotation of the Arabidopsis thaliana reference genome.</title>
        <authorList>
            <person name="Cheng C.Y."/>
            <person name="Krishnakumar V."/>
            <person name="Chan A.P."/>
            <person name="Thibaud-Nissen F."/>
            <person name="Schobel S."/>
            <person name="Town C.D."/>
        </authorList>
    </citation>
    <scope>GENOME REANNOTATION</scope>
    <source>
        <strain>cv. Columbia</strain>
    </source>
</reference>
<reference key="3">
    <citation type="journal article" date="2002" name="Science">
        <title>Functional annotation of a full-length Arabidopsis cDNA collection.</title>
        <authorList>
            <person name="Seki M."/>
            <person name="Narusaka M."/>
            <person name="Kamiya A."/>
            <person name="Ishida J."/>
            <person name="Satou M."/>
            <person name="Sakurai T."/>
            <person name="Nakajima M."/>
            <person name="Enju A."/>
            <person name="Akiyama K."/>
            <person name="Oono Y."/>
            <person name="Muramatsu M."/>
            <person name="Hayashizaki Y."/>
            <person name="Kawai J."/>
            <person name="Carninci P."/>
            <person name="Itoh M."/>
            <person name="Ishii Y."/>
            <person name="Arakawa T."/>
            <person name="Shibata K."/>
            <person name="Shinagawa A."/>
            <person name="Shinozaki K."/>
        </authorList>
    </citation>
    <scope>NUCLEOTIDE SEQUENCE [LARGE SCALE MRNA]</scope>
    <source>
        <strain>cv. Columbia</strain>
    </source>
</reference>
<reference key="4">
    <citation type="submission" date="2008-06" db="EMBL/GenBank/DDBJ databases">
        <title>Arabidopsis ORF clones.</title>
        <authorList>
            <person name="De Los Reyes C."/>
            <person name="Quan R."/>
            <person name="Chen H."/>
            <person name="Bautista V.R."/>
            <person name="Kim C.J."/>
            <person name="Ecker J.R."/>
        </authorList>
    </citation>
    <scope>NUCLEOTIDE SEQUENCE [LARGE SCALE MRNA]</scope>
    <source>
        <strain>cv. Columbia</strain>
    </source>
</reference>
<reference key="5">
    <citation type="journal article" date="2008" name="PLoS Genet.">
        <title>Evolutionary diversification of plant shikimate kinase gene duplicates.</title>
        <authorList>
            <person name="Fucile G."/>
            <person name="Falconer S."/>
            <person name="Christendat D."/>
        </authorList>
    </citation>
    <scope>FUNCTION</scope>
    <scope>BIOPHYSICOCHEMICAL PROPERTIES</scope>
    <scope>GENE FAMILY</scope>
    <scope>NOMENCLATURE</scope>
    <scope>DISRUPTION PHENOTYPE</scope>
</reference>
<reference key="6">
    <citation type="journal article" date="2011" name="Protein Sci.">
        <title>Structural and biochemical investigation of two Arabidopsis shikimate kinases: the heat-inducible isoform is thermostable.</title>
        <authorList>
            <person name="Fucile G."/>
            <person name="Garcia C."/>
            <person name="Carlsson J."/>
            <person name="Sunnerhagen M."/>
            <person name="Christendat D."/>
        </authorList>
    </citation>
    <scope>FUNCTION</scope>
    <scope>CATALYTIC ACTIVITY</scope>
    <scope>SUBUNIT</scope>
    <scope>INDUCTION</scope>
</reference>
<dbReference type="EC" id="2.7.1.71"/>
<dbReference type="EMBL" id="AC007019">
    <property type="protein sequence ID" value="AAD20411.1"/>
    <property type="molecule type" value="Genomic_DNA"/>
</dbReference>
<dbReference type="EMBL" id="CP002685">
    <property type="protein sequence ID" value="AEC07240.1"/>
    <property type="molecule type" value="Genomic_DNA"/>
</dbReference>
<dbReference type="EMBL" id="CP002685">
    <property type="protein sequence ID" value="AEC07241.1"/>
    <property type="molecule type" value="Genomic_DNA"/>
</dbReference>
<dbReference type="EMBL" id="CP002685">
    <property type="protein sequence ID" value="AEC07244.1"/>
    <property type="molecule type" value="Genomic_DNA"/>
</dbReference>
<dbReference type="EMBL" id="AK118899">
    <property type="protein sequence ID" value="BAC43483.2"/>
    <property type="molecule type" value="mRNA"/>
</dbReference>
<dbReference type="EMBL" id="BT032871">
    <property type="protein sequence ID" value="ACD85800.1"/>
    <property type="molecule type" value="mRNA"/>
</dbReference>
<dbReference type="PIR" id="A84607">
    <property type="entry name" value="A84607"/>
</dbReference>
<dbReference type="RefSeq" id="NP_001077938.1">
    <molecule id="Q9SJ05-1"/>
    <property type="nucleotide sequence ID" value="NM_001084469.1"/>
</dbReference>
<dbReference type="RefSeq" id="NP_179785.2">
    <molecule id="Q9SJ05-1"/>
    <property type="nucleotide sequence ID" value="NM_127763.4"/>
</dbReference>
<dbReference type="RefSeq" id="NP_973507.2">
    <molecule id="Q9SJ05-1"/>
    <property type="nucleotide sequence ID" value="NM_201778.3"/>
</dbReference>
<dbReference type="SMR" id="Q9SJ05"/>
<dbReference type="BioGRID" id="2083">
    <property type="interactions" value="1"/>
</dbReference>
<dbReference type="FunCoup" id="Q9SJ05">
    <property type="interactions" value="298"/>
</dbReference>
<dbReference type="STRING" id="3702.Q9SJ05"/>
<dbReference type="iPTMnet" id="Q9SJ05"/>
<dbReference type="PaxDb" id="3702-AT2G21940.4"/>
<dbReference type="ProteomicsDB" id="234527">
    <molecule id="Q9SJ05-1"/>
</dbReference>
<dbReference type="EnsemblPlants" id="AT2G21940.1">
    <molecule id="Q9SJ05-1"/>
    <property type="protein sequence ID" value="AT2G21940.1"/>
    <property type="gene ID" value="AT2G21940"/>
</dbReference>
<dbReference type="EnsemblPlants" id="AT2G21940.2">
    <molecule id="Q9SJ05-1"/>
    <property type="protein sequence ID" value="AT2G21940.2"/>
    <property type="gene ID" value="AT2G21940"/>
</dbReference>
<dbReference type="EnsemblPlants" id="AT2G21940.5">
    <molecule id="Q9SJ05-1"/>
    <property type="protein sequence ID" value="AT2G21940.5"/>
    <property type="gene ID" value="AT2G21940"/>
</dbReference>
<dbReference type="GeneID" id="816730"/>
<dbReference type="Gramene" id="AT2G21940.1">
    <molecule id="Q9SJ05-1"/>
    <property type="protein sequence ID" value="AT2G21940.1"/>
    <property type="gene ID" value="AT2G21940"/>
</dbReference>
<dbReference type="Gramene" id="AT2G21940.2">
    <molecule id="Q9SJ05-1"/>
    <property type="protein sequence ID" value="AT2G21940.2"/>
    <property type="gene ID" value="AT2G21940"/>
</dbReference>
<dbReference type="Gramene" id="AT2G21940.5">
    <molecule id="Q9SJ05-1"/>
    <property type="protein sequence ID" value="AT2G21940.5"/>
    <property type="gene ID" value="AT2G21940"/>
</dbReference>
<dbReference type="KEGG" id="ath:AT2G21940"/>
<dbReference type="Araport" id="AT2G21940"/>
<dbReference type="TAIR" id="AT2G21940">
    <property type="gene designation" value="SK1"/>
</dbReference>
<dbReference type="eggNOG" id="ENOG502S43P">
    <property type="taxonomic scope" value="Eukaryota"/>
</dbReference>
<dbReference type="HOGENOM" id="CLU_057607_0_1_1"/>
<dbReference type="InParanoid" id="Q9SJ05"/>
<dbReference type="OMA" id="AVKQGHN"/>
<dbReference type="OrthoDB" id="197068at2759"/>
<dbReference type="PhylomeDB" id="Q9SJ05"/>
<dbReference type="BioCyc" id="ARA:AT2G21940-MONOMER"/>
<dbReference type="BioCyc" id="MetaCyc:AT2G21940-MONOMER"/>
<dbReference type="UniPathway" id="UPA00053">
    <property type="reaction ID" value="UER00088"/>
</dbReference>
<dbReference type="PRO" id="PR:Q9SJ05"/>
<dbReference type="Proteomes" id="UP000006548">
    <property type="component" value="Chromosome 2"/>
</dbReference>
<dbReference type="ExpressionAtlas" id="Q9SJ05">
    <property type="expression patterns" value="baseline and differential"/>
</dbReference>
<dbReference type="GO" id="GO:0009507">
    <property type="term" value="C:chloroplast"/>
    <property type="evidence" value="ECO:0007669"/>
    <property type="project" value="UniProtKB-SubCell"/>
</dbReference>
<dbReference type="GO" id="GO:0005524">
    <property type="term" value="F:ATP binding"/>
    <property type="evidence" value="ECO:0007669"/>
    <property type="project" value="UniProtKB-KW"/>
</dbReference>
<dbReference type="GO" id="GO:0046872">
    <property type="term" value="F:metal ion binding"/>
    <property type="evidence" value="ECO:0007669"/>
    <property type="project" value="UniProtKB-KW"/>
</dbReference>
<dbReference type="GO" id="GO:0004765">
    <property type="term" value="F:shikimate kinase activity"/>
    <property type="evidence" value="ECO:0007669"/>
    <property type="project" value="UniProtKB-EC"/>
</dbReference>
<dbReference type="GO" id="GO:0008652">
    <property type="term" value="P:amino acid biosynthetic process"/>
    <property type="evidence" value="ECO:0007669"/>
    <property type="project" value="UniProtKB-KW"/>
</dbReference>
<dbReference type="GO" id="GO:0009073">
    <property type="term" value="P:aromatic amino acid family biosynthetic process"/>
    <property type="evidence" value="ECO:0007669"/>
    <property type="project" value="UniProtKB-KW"/>
</dbReference>
<dbReference type="GO" id="GO:0009423">
    <property type="term" value="P:chorismate biosynthetic process"/>
    <property type="evidence" value="ECO:0007669"/>
    <property type="project" value="UniProtKB-UniPathway"/>
</dbReference>
<dbReference type="CDD" id="cd00464">
    <property type="entry name" value="SK"/>
    <property type="match status" value="1"/>
</dbReference>
<dbReference type="FunFam" id="3.40.50.300:FF:000822">
    <property type="entry name" value="Shikimate kinase, chloroplastic"/>
    <property type="match status" value="1"/>
</dbReference>
<dbReference type="Gene3D" id="3.40.50.300">
    <property type="entry name" value="P-loop containing nucleotide triphosphate hydrolases"/>
    <property type="match status" value="1"/>
</dbReference>
<dbReference type="HAMAP" id="MF_00109">
    <property type="entry name" value="Shikimate_kinase"/>
    <property type="match status" value="1"/>
</dbReference>
<dbReference type="InterPro" id="IPR027417">
    <property type="entry name" value="P-loop_NTPase"/>
</dbReference>
<dbReference type="InterPro" id="IPR031322">
    <property type="entry name" value="Shikimate/glucono_kinase"/>
</dbReference>
<dbReference type="InterPro" id="IPR000623">
    <property type="entry name" value="Shikimate_kinase/TSH1"/>
</dbReference>
<dbReference type="InterPro" id="IPR023000">
    <property type="entry name" value="Shikimate_kinase_CS"/>
</dbReference>
<dbReference type="PANTHER" id="PTHR21087">
    <property type="entry name" value="SHIKIMATE KINASE"/>
    <property type="match status" value="1"/>
</dbReference>
<dbReference type="PANTHER" id="PTHR21087:SF16">
    <property type="entry name" value="SHIKIMATE KINASE 1, CHLOROPLASTIC"/>
    <property type="match status" value="1"/>
</dbReference>
<dbReference type="Pfam" id="PF01202">
    <property type="entry name" value="SKI"/>
    <property type="match status" value="1"/>
</dbReference>
<dbReference type="PRINTS" id="PR01100">
    <property type="entry name" value="SHIKIMTKNASE"/>
</dbReference>
<dbReference type="SUPFAM" id="SSF52540">
    <property type="entry name" value="P-loop containing nucleoside triphosphate hydrolases"/>
    <property type="match status" value="1"/>
</dbReference>
<dbReference type="PROSITE" id="PS01128">
    <property type="entry name" value="SHIKIMATE_KINASE"/>
    <property type="match status" value="1"/>
</dbReference>
<keyword id="KW-0025">Alternative splicing</keyword>
<keyword id="KW-0028">Amino-acid biosynthesis</keyword>
<keyword id="KW-0057">Aromatic amino acid biosynthesis</keyword>
<keyword id="KW-0067">ATP-binding</keyword>
<keyword id="KW-0150">Chloroplast</keyword>
<keyword id="KW-1015">Disulfide bond</keyword>
<keyword id="KW-0418">Kinase</keyword>
<keyword id="KW-0460">Magnesium</keyword>
<keyword id="KW-0479">Metal-binding</keyword>
<keyword id="KW-0547">Nucleotide-binding</keyword>
<keyword id="KW-0934">Plastid</keyword>
<keyword id="KW-1185">Reference proteome</keyword>
<keyword id="KW-0346">Stress response</keyword>
<keyword id="KW-0808">Transferase</keyword>
<keyword id="KW-0809">Transit peptide</keyword>
<evidence type="ECO:0000250" key="1"/>
<evidence type="ECO:0000255" key="2"/>
<evidence type="ECO:0000269" key="3">
    <source>
    </source>
</evidence>
<evidence type="ECO:0000269" key="4">
    <source>
    </source>
</evidence>
<evidence type="ECO:0000305" key="5"/>
<evidence type="ECO:0000305" key="6">
    <source>
    </source>
</evidence>
<feature type="transit peptide" description="Chloroplast" evidence="2">
    <location>
        <begin position="1"/>
        <end position="66"/>
    </location>
</feature>
<feature type="chain" id="PRO_0000002292" description="Shikimate kinase 1, chloroplastic">
    <location>
        <begin position="67"/>
        <end position="303"/>
    </location>
</feature>
<feature type="binding site" evidence="1">
    <location>
        <begin position="109"/>
        <end position="116"/>
    </location>
    <ligand>
        <name>ATP</name>
        <dbReference type="ChEBI" id="CHEBI:30616"/>
    </ligand>
</feature>
<feature type="binding site" evidence="1">
    <location>
        <position position="116"/>
    </location>
    <ligand>
        <name>Mg(2+)</name>
        <dbReference type="ChEBI" id="CHEBI:18420"/>
    </ligand>
</feature>
<feature type="binding site" evidence="1">
    <location>
        <position position="134"/>
    </location>
    <ligand>
        <name>substrate</name>
    </ligand>
</feature>
<feature type="binding site" evidence="1">
    <location>
        <position position="159"/>
    </location>
    <ligand>
        <name>substrate</name>
    </ligand>
</feature>
<feature type="binding site" evidence="1">
    <location>
        <position position="181"/>
    </location>
    <ligand>
        <name>substrate</name>
    </ligand>
</feature>
<feature type="binding site" evidence="1">
    <location>
        <position position="220"/>
    </location>
    <ligand>
        <name>ATP</name>
        <dbReference type="ChEBI" id="CHEBI:30616"/>
    </ligand>
</feature>
<feature type="disulfide bond" description="Interchain" evidence="2">
    <location>
        <position position="67"/>
    </location>
</feature>
<feature type="sequence conflict" description="In Ref. 3; BAC43483." evidence="5" ref="3">
    <original>D</original>
    <variation>N</variation>
    <location>
        <position position="229"/>
    </location>
</feature>
<feature type="sequence conflict" description="In Ref. 4; ACD85800." evidence="5" ref="4">
    <original>N</original>
    <variation>D</variation>
    <location>
        <position position="269"/>
    </location>
</feature>
<accession>Q9SJ05</accession>
<accession>B3DN83</accession>
<accession>Q3EBW8</accession>
<accession>Q8GT76</accession>
<proteinExistence type="evidence at protein level"/>
<protein>
    <recommendedName>
        <fullName>Shikimate kinase 1, chloroplastic</fullName>
        <shortName>AtSK1</shortName>
        <ecNumber>2.7.1.71</ecNumber>
    </recommendedName>
</protein>
<name>SK1_ARATH</name>
<comment type="function">
    <text evidence="3 4">Catalyzes the specific phosphorylation of the 3-hydroxyl group of shikimic acid using ATP as a cosubstrate.</text>
</comment>
<comment type="catalytic activity">
    <reaction evidence="4">
        <text>shikimate + ATP = 3-phosphoshikimate + ADP + H(+)</text>
        <dbReference type="Rhea" id="RHEA:13121"/>
        <dbReference type="ChEBI" id="CHEBI:15378"/>
        <dbReference type="ChEBI" id="CHEBI:30616"/>
        <dbReference type="ChEBI" id="CHEBI:36208"/>
        <dbReference type="ChEBI" id="CHEBI:145989"/>
        <dbReference type="ChEBI" id="CHEBI:456216"/>
        <dbReference type="EC" id="2.7.1.71"/>
    </reaction>
</comment>
<comment type="cofactor">
    <cofactor evidence="1">
        <name>Mg(2+)</name>
        <dbReference type="ChEBI" id="CHEBI:18420"/>
    </cofactor>
    <text evidence="1">Binds 1 Mg(2+) ion per subunit.</text>
</comment>
<comment type="biophysicochemical properties">
    <kinetics>
        <KM evidence="3">648 uM for shikimate</KM>
        <KM evidence="3">218 uM for ATP</KM>
    </kinetics>
</comment>
<comment type="pathway">
    <text>Metabolic intermediate biosynthesis; chorismate biosynthesis; chorismate from D-erythrose 4-phosphate and phosphoenolpyruvate: step 5/7.</text>
</comment>
<comment type="subunit">
    <text evidence="4">Homodimer.</text>
</comment>
<comment type="subcellular location">
    <subcellularLocation>
        <location evidence="1">Plastid</location>
        <location evidence="1">Chloroplast</location>
    </subcellularLocation>
</comment>
<comment type="alternative products">
    <event type="alternative splicing"/>
    <isoform>
        <id>Q9SJ05-1</id>
        <name>1</name>
        <sequence type="displayed"/>
    </isoform>
    <text>A number of isoforms are produced. According to EST sequences.</text>
</comment>
<comment type="induction">
    <text evidence="4">By heat stress.</text>
</comment>
<comment type="disruption phenotype">
    <text evidence="3">No visible phenotype under normal growth conditions.</text>
</comment>
<comment type="miscellaneous">
    <text evidence="6">SK1 forms a homodimer in solution, which may facilitate its relative thermostability when exposed at 37 degrees Celsius.</text>
</comment>
<comment type="similarity">
    <text evidence="5">Belongs to the shikimate kinase family.</text>
</comment>
<sequence length="303" mass="33982">MEAAITQRIQYPSWVDCRKVECKPQRGSLRYSQQVKVDRRFRGLSLARLQPERRNDQRRAVSPAVSCSDNNSSALLETGSVYPFDEDILKRKAEEVKPYLNGRSMYLVGMMGSGKTTVGKLMSKVLGYTFFDCDTLIEQAMNGTSVAEIFVHHGENFFRGKETDALKKLSSRYQVVVSTGGGAVIRPINWKYMHKGISIWLDVPLEALAHRIAAVGTDSRPLLHDESGDAYSVAFKRLSAIWDERGEAYTNANARVSLENIAAKRGYKNVSDLTPTEIAIEAFEQVLSFLEKEETMEIPDGDL</sequence>